<comment type="subunit">
    <text evidence="1">Monomer. Interacts with AZGP1 (By similarity).</text>
</comment>
<comment type="subcellular location">
    <subcellularLocation>
        <location evidence="1">Secreted</location>
    </subcellularLocation>
</comment>
<comment type="similarity">
    <text evidence="4">Belongs to the PIP family.</text>
</comment>
<keyword id="KW-1015">Disulfide bond</keyword>
<keyword id="KW-0325">Glycoprotein</keyword>
<keyword id="KW-0873">Pyrrolidone carboxylic acid</keyword>
<keyword id="KW-0964">Secreted</keyword>
<keyword id="KW-0732">Signal</keyword>
<gene>
    <name type="primary">PIP</name>
</gene>
<evidence type="ECO:0000250" key="1"/>
<evidence type="ECO:0000250" key="2">
    <source>
        <dbReference type="UniProtKB" id="P12273"/>
    </source>
</evidence>
<evidence type="ECO:0000255" key="3"/>
<evidence type="ECO:0000305" key="4"/>
<proteinExistence type="inferred from homology"/>
<protein>
    <recommendedName>
        <fullName>Prolactin-inducible protein homolog</fullName>
    </recommendedName>
    <alternativeName>
        <fullName>Prolactin-induced protein</fullName>
    </alternativeName>
</protein>
<reference key="1">
    <citation type="journal article" date="2006" name="Gene">
        <title>Origin and evolution of gene for prolactin-induced protein.</title>
        <authorList>
            <person name="Kitano T."/>
            <person name="Tian W."/>
            <person name="Umetsu K."/>
            <person name="Yuasa I."/>
            <person name="Yamazaki K."/>
            <person name="Saitou N."/>
            <person name="Osawa M."/>
        </authorList>
    </citation>
    <scope>NUCLEOTIDE SEQUENCE [GENOMIC DNA]</scope>
    <source>
        <strain>Isolate T004</strain>
    </source>
</reference>
<sequence>MRLLQLLFRASPATLLLVLCLQLGANKAQDNTRKIIIKDFDIPKSVRPNEEVTATLAVRTELKECMVVKTYLISSVPLEGGFNYKYTACLCNNNPKTFYWDFYTNRTVQIAAVVDVIRELGICPDDAAVIPIKSNRFYTTETLKVE</sequence>
<organism>
    <name type="scientific">Hylobates agilis</name>
    <name type="common">Agile gibbon</name>
    <dbReference type="NCBI Taxonomy" id="9579"/>
    <lineage>
        <taxon>Eukaryota</taxon>
        <taxon>Metazoa</taxon>
        <taxon>Chordata</taxon>
        <taxon>Craniata</taxon>
        <taxon>Vertebrata</taxon>
        <taxon>Euteleostomi</taxon>
        <taxon>Mammalia</taxon>
        <taxon>Eutheria</taxon>
        <taxon>Euarchontoglires</taxon>
        <taxon>Primates</taxon>
        <taxon>Haplorrhini</taxon>
        <taxon>Catarrhini</taxon>
        <taxon>Hylobatidae</taxon>
        <taxon>Hylobates</taxon>
    </lineage>
</organism>
<feature type="signal peptide" evidence="1">
    <location>
        <begin position="1"/>
        <end position="28"/>
    </location>
</feature>
<feature type="chain" id="PRO_0000273195" description="Prolactin-inducible protein homolog">
    <location>
        <begin position="29"/>
        <end position="146"/>
    </location>
</feature>
<feature type="modified residue" description="Pyrrolidone carboxylic acid" evidence="2">
    <location>
        <position position="29"/>
    </location>
</feature>
<feature type="glycosylation site" description="N-linked (GlcNAc...) asparagine" evidence="3">
    <location>
        <position position="105"/>
    </location>
</feature>
<feature type="disulfide bond" evidence="1">
    <location>
        <begin position="65"/>
        <end position="91"/>
    </location>
</feature>
<feature type="disulfide bond" evidence="1">
    <location>
        <begin position="89"/>
        <end position="123"/>
    </location>
</feature>
<name>PIP_HYLAG</name>
<accession>A0A890</accession>
<dbReference type="EMBL" id="AB251906">
    <property type="protein sequence ID" value="BAF35626.1"/>
    <property type="molecule type" value="Genomic_DNA"/>
</dbReference>
<dbReference type="SMR" id="A0A890"/>
<dbReference type="GlyCosmos" id="A0A890">
    <property type="glycosylation" value="1 site, No reported glycans"/>
</dbReference>
<dbReference type="GO" id="GO:0005615">
    <property type="term" value="C:extracellular space"/>
    <property type="evidence" value="ECO:0007669"/>
    <property type="project" value="TreeGrafter"/>
</dbReference>
<dbReference type="GO" id="GO:0004190">
    <property type="term" value="F:aspartic-type endopeptidase activity"/>
    <property type="evidence" value="ECO:0007669"/>
    <property type="project" value="TreeGrafter"/>
</dbReference>
<dbReference type="GO" id="GO:0006508">
    <property type="term" value="P:proteolysis"/>
    <property type="evidence" value="ECO:0007669"/>
    <property type="project" value="TreeGrafter"/>
</dbReference>
<dbReference type="GO" id="GO:0002682">
    <property type="term" value="P:regulation of immune system process"/>
    <property type="evidence" value="ECO:0007669"/>
    <property type="project" value="TreeGrafter"/>
</dbReference>
<dbReference type="FunFam" id="2.60.40.10:FF:001572">
    <property type="entry name" value="Prolactin-inducible protein homolog"/>
    <property type="match status" value="1"/>
</dbReference>
<dbReference type="Gene3D" id="2.60.40.10">
    <property type="entry name" value="Immunoglobulins"/>
    <property type="match status" value="1"/>
</dbReference>
<dbReference type="InterPro" id="IPR013783">
    <property type="entry name" value="Ig-like_fold"/>
</dbReference>
<dbReference type="InterPro" id="IPR014756">
    <property type="entry name" value="Ig_E-set"/>
</dbReference>
<dbReference type="InterPro" id="IPR007990">
    <property type="entry name" value="PIP"/>
</dbReference>
<dbReference type="PANTHER" id="PTHR15096:SF5">
    <property type="entry name" value="PROLACTIN-INDUCIBLE PROTEIN"/>
    <property type="match status" value="1"/>
</dbReference>
<dbReference type="PANTHER" id="PTHR15096">
    <property type="entry name" value="PROLACTIN-INDUCIBLE PROTEIN/SEMINAL VESICLE ANTIGEN"/>
    <property type="match status" value="1"/>
</dbReference>
<dbReference type="Pfam" id="PF05326">
    <property type="entry name" value="SVA"/>
    <property type="match status" value="1"/>
</dbReference>
<dbReference type="PIRSF" id="PIRSF002572">
    <property type="entry name" value="PIP-GCDFP-15"/>
    <property type="match status" value="1"/>
</dbReference>
<dbReference type="SUPFAM" id="SSF81296">
    <property type="entry name" value="E set domains"/>
    <property type="match status" value="1"/>
</dbReference>